<proteinExistence type="inferred from homology"/>
<organism>
    <name type="scientific">Shewanella halifaxensis (strain HAW-EB4)</name>
    <dbReference type="NCBI Taxonomy" id="458817"/>
    <lineage>
        <taxon>Bacteria</taxon>
        <taxon>Pseudomonadati</taxon>
        <taxon>Pseudomonadota</taxon>
        <taxon>Gammaproteobacteria</taxon>
        <taxon>Alteromonadales</taxon>
        <taxon>Shewanellaceae</taxon>
        <taxon>Shewanella</taxon>
    </lineage>
</organism>
<dbReference type="EC" id="3.6.5.-" evidence="1"/>
<dbReference type="EMBL" id="CP000931">
    <property type="protein sequence ID" value="ABZ75482.1"/>
    <property type="molecule type" value="Genomic_DNA"/>
</dbReference>
<dbReference type="RefSeq" id="WP_012276032.1">
    <property type="nucleotide sequence ID" value="NC_010334.1"/>
</dbReference>
<dbReference type="SMR" id="B0TUI2"/>
<dbReference type="STRING" id="458817.Shal_0907"/>
<dbReference type="KEGG" id="shl:Shal_0907"/>
<dbReference type="eggNOG" id="COG0536">
    <property type="taxonomic scope" value="Bacteria"/>
</dbReference>
<dbReference type="HOGENOM" id="CLU_011747_2_0_6"/>
<dbReference type="OrthoDB" id="9807318at2"/>
<dbReference type="Proteomes" id="UP000001317">
    <property type="component" value="Chromosome"/>
</dbReference>
<dbReference type="GO" id="GO:0005737">
    <property type="term" value="C:cytoplasm"/>
    <property type="evidence" value="ECO:0007669"/>
    <property type="project" value="UniProtKB-SubCell"/>
</dbReference>
<dbReference type="GO" id="GO:0005525">
    <property type="term" value="F:GTP binding"/>
    <property type="evidence" value="ECO:0007669"/>
    <property type="project" value="UniProtKB-UniRule"/>
</dbReference>
<dbReference type="GO" id="GO:0003924">
    <property type="term" value="F:GTPase activity"/>
    <property type="evidence" value="ECO:0007669"/>
    <property type="project" value="UniProtKB-UniRule"/>
</dbReference>
<dbReference type="GO" id="GO:0000287">
    <property type="term" value="F:magnesium ion binding"/>
    <property type="evidence" value="ECO:0007669"/>
    <property type="project" value="InterPro"/>
</dbReference>
<dbReference type="GO" id="GO:0042254">
    <property type="term" value="P:ribosome biogenesis"/>
    <property type="evidence" value="ECO:0007669"/>
    <property type="project" value="UniProtKB-UniRule"/>
</dbReference>
<dbReference type="CDD" id="cd01898">
    <property type="entry name" value="Obg"/>
    <property type="match status" value="1"/>
</dbReference>
<dbReference type="FunFam" id="2.70.210.12:FF:000001">
    <property type="entry name" value="GTPase Obg"/>
    <property type="match status" value="1"/>
</dbReference>
<dbReference type="Gene3D" id="2.70.210.12">
    <property type="entry name" value="GTP1/OBG domain"/>
    <property type="match status" value="1"/>
</dbReference>
<dbReference type="Gene3D" id="3.40.50.300">
    <property type="entry name" value="P-loop containing nucleotide triphosphate hydrolases"/>
    <property type="match status" value="1"/>
</dbReference>
<dbReference type="HAMAP" id="MF_01454">
    <property type="entry name" value="GTPase_Obg"/>
    <property type="match status" value="1"/>
</dbReference>
<dbReference type="InterPro" id="IPR031167">
    <property type="entry name" value="G_OBG"/>
</dbReference>
<dbReference type="InterPro" id="IPR006073">
    <property type="entry name" value="GTP-bd"/>
</dbReference>
<dbReference type="InterPro" id="IPR014100">
    <property type="entry name" value="GTP-bd_Obg/CgtA"/>
</dbReference>
<dbReference type="InterPro" id="IPR006074">
    <property type="entry name" value="GTP1-OBG_CS"/>
</dbReference>
<dbReference type="InterPro" id="IPR006169">
    <property type="entry name" value="GTP1_OBG_dom"/>
</dbReference>
<dbReference type="InterPro" id="IPR036726">
    <property type="entry name" value="GTP1_OBG_dom_sf"/>
</dbReference>
<dbReference type="InterPro" id="IPR045086">
    <property type="entry name" value="OBG_GTPase"/>
</dbReference>
<dbReference type="InterPro" id="IPR027417">
    <property type="entry name" value="P-loop_NTPase"/>
</dbReference>
<dbReference type="NCBIfam" id="TIGR02729">
    <property type="entry name" value="Obg_CgtA"/>
    <property type="match status" value="1"/>
</dbReference>
<dbReference type="NCBIfam" id="NF008955">
    <property type="entry name" value="PRK12297.1"/>
    <property type="match status" value="1"/>
</dbReference>
<dbReference type="NCBIfam" id="NF008956">
    <property type="entry name" value="PRK12299.1"/>
    <property type="match status" value="1"/>
</dbReference>
<dbReference type="PANTHER" id="PTHR11702">
    <property type="entry name" value="DEVELOPMENTALLY REGULATED GTP-BINDING PROTEIN-RELATED"/>
    <property type="match status" value="1"/>
</dbReference>
<dbReference type="PANTHER" id="PTHR11702:SF31">
    <property type="entry name" value="MITOCHONDRIAL RIBOSOME-ASSOCIATED GTPASE 2"/>
    <property type="match status" value="1"/>
</dbReference>
<dbReference type="Pfam" id="PF01018">
    <property type="entry name" value="GTP1_OBG"/>
    <property type="match status" value="1"/>
</dbReference>
<dbReference type="Pfam" id="PF01926">
    <property type="entry name" value="MMR_HSR1"/>
    <property type="match status" value="1"/>
</dbReference>
<dbReference type="PIRSF" id="PIRSF002401">
    <property type="entry name" value="GTP_bd_Obg/CgtA"/>
    <property type="match status" value="1"/>
</dbReference>
<dbReference type="PRINTS" id="PR00326">
    <property type="entry name" value="GTP1OBG"/>
</dbReference>
<dbReference type="SUPFAM" id="SSF82051">
    <property type="entry name" value="Obg GTP-binding protein N-terminal domain"/>
    <property type="match status" value="1"/>
</dbReference>
<dbReference type="SUPFAM" id="SSF52540">
    <property type="entry name" value="P-loop containing nucleoside triphosphate hydrolases"/>
    <property type="match status" value="1"/>
</dbReference>
<dbReference type="PROSITE" id="PS51710">
    <property type="entry name" value="G_OBG"/>
    <property type="match status" value="1"/>
</dbReference>
<dbReference type="PROSITE" id="PS00905">
    <property type="entry name" value="GTP1_OBG"/>
    <property type="match status" value="1"/>
</dbReference>
<dbReference type="PROSITE" id="PS51883">
    <property type="entry name" value="OBG"/>
    <property type="match status" value="1"/>
</dbReference>
<keyword id="KW-0963">Cytoplasm</keyword>
<keyword id="KW-0342">GTP-binding</keyword>
<keyword id="KW-0378">Hydrolase</keyword>
<keyword id="KW-0460">Magnesium</keyword>
<keyword id="KW-0479">Metal-binding</keyword>
<keyword id="KW-0547">Nucleotide-binding</keyword>
<gene>
    <name evidence="1" type="primary">obg</name>
    <name type="ordered locus">Shal_0907</name>
</gene>
<feature type="chain" id="PRO_0000386242" description="GTPase Obg">
    <location>
        <begin position="1"/>
        <end position="387"/>
    </location>
</feature>
<feature type="domain" description="Obg" evidence="2">
    <location>
        <begin position="1"/>
        <end position="159"/>
    </location>
</feature>
<feature type="domain" description="OBG-type G" evidence="1">
    <location>
        <begin position="160"/>
        <end position="333"/>
    </location>
</feature>
<feature type="binding site" evidence="1">
    <location>
        <begin position="166"/>
        <end position="173"/>
    </location>
    <ligand>
        <name>GTP</name>
        <dbReference type="ChEBI" id="CHEBI:37565"/>
    </ligand>
</feature>
<feature type="binding site" evidence="1">
    <location>
        <position position="173"/>
    </location>
    <ligand>
        <name>Mg(2+)</name>
        <dbReference type="ChEBI" id="CHEBI:18420"/>
    </ligand>
</feature>
<feature type="binding site" evidence="1">
    <location>
        <begin position="191"/>
        <end position="195"/>
    </location>
    <ligand>
        <name>GTP</name>
        <dbReference type="ChEBI" id="CHEBI:37565"/>
    </ligand>
</feature>
<feature type="binding site" evidence="1">
    <location>
        <position position="193"/>
    </location>
    <ligand>
        <name>Mg(2+)</name>
        <dbReference type="ChEBI" id="CHEBI:18420"/>
    </ligand>
</feature>
<feature type="binding site" evidence="1">
    <location>
        <begin position="213"/>
        <end position="216"/>
    </location>
    <ligand>
        <name>GTP</name>
        <dbReference type="ChEBI" id="CHEBI:37565"/>
    </ligand>
</feature>
<feature type="binding site" evidence="1">
    <location>
        <begin position="283"/>
        <end position="286"/>
    </location>
    <ligand>
        <name>GTP</name>
        <dbReference type="ChEBI" id="CHEBI:37565"/>
    </ligand>
</feature>
<feature type="binding site" evidence="1">
    <location>
        <begin position="314"/>
        <end position="316"/>
    </location>
    <ligand>
        <name>GTP</name>
        <dbReference type="ChEBI" id="CHEBI:37565"/>
    </ligand>
</feature>
<sequence length="387" mass="42405">MKFVDEAIIRVEAGNGGSGCVSFRREKYVPDGGPDGGDGGDGGSVYLQADENLNTLITFQFERFHIAERGKNGRGRDCTGHGGEDLILKVPVGTRAIDNDTEESLGDLTTHGQKLLVAKGGFHGLGNTRFKSSTNRAPRQKTLGTDGEVRSLKLELLLLADVGLLGMPNAGKSTFIRSVSKAKPKVADYPFTTLVPNLGVVNPRPGQSFVIADIPGLIEGAADGAGLGVQFLKHLERCRVLLHILDVEPIDGSDPVESARAIVGELEKHSPKLAGKPRWLVINKADLMLEEELQERIDHIVKELEWDGDVYTISAYNREGTAELAVKLLDFIASLPPEEEVDADAEVEFKWDNYHQSANESVNEDFDDDFDDDFDEDDYDVEIIYQR</sequence>
<comment type="function">
    <text evidence="1">An essential GTPase which binds GTP, GDP and possibly (p)ppGpp with moderate affinity, with high nucleotide exchange rates and a fairly low GTP hydrolysis rate. Plays a role in control of the cell cycle, stress response, ribosome biogenesis and in those bacteria that undergo differentiation, in morphogenesis control.</text>
</comment>
<comment type="cofactor">
    <cofactor evidence="1">
        <name>Mg(2+)</name>
        <dbReference type="ChEBI" id="CHEBI:18420"/>
    </cofactor>
</comment>
<comment type="subunit">
    <text evidence="1">Monomer.</text>
</comment>
<comment type="subcellular location">
    <subcellularLocation>
        <location evidence="1">Cytoplasm</location>
    </subcellularLocation>
</comment>
<comment type="similarity">
    <text evidence="1">Belongs to the TRAFAC class OBG-HflX-like GTPase superfamily. OBG GTPase family.</text>
</comment>
<reference key="1">
    <citation type="submission" date="2008-01" db="EMBL/GenBank/DDBJ databases">
        <title>Complete sequence of Shewanella halifaxensis HAW-EB4.</title>
        <authorList>
            <consortium name="US DOE Joint Genome Institute"/>
            <person name="Copeland A."/>
            <person name="Lucas S."/>
            <person name="Lapidus A."/>
            <person name="Glavina del Rio T."/>
            <person name="Dalin E."/>
            <person name="Tice H."/>
            <person name="Bruce D."/>
            <person name="Goodwin L."/>
            <person name="Pitluck S."/>
            <person name="Sims D."/>
            <person name="Brettin T."/>
            <person name="Detter J.C."/>
            <person name="Han C."/>
            <person name="Kuske C.R."/>
            <person name="Schmutz J."/>
            <person name="Larimer F."/>
            <person name="Land M."/>
            <person name="Hauser L."/>
            <person name="Kyrpides N."/>
            <person name="Kim E."/>
            <person name="Zhao J.-S."/>
            <person name="Richardson P."/>
        </authorList>
    </citation>
    <scope>NUCLEOTIDE SEQUENCE [LARGE SCALE GENOMIC DNA]</scope>
    <source>
        <strain>HAW-EB4</strain>
    </source>
</reference>
<accession>B0TUI2</accession>
<protein>
    <recommendedName>
        <fullName evidence="1">GTPase Obg</fullName>
        <ecNumber evidence="1">3.6.5.-</ecNumber>
    </recommendedName>
    <alternativeName>
        <fullName evidence="1">GTP-binding protein Obg</fullName>
    </alternativeName>
</protein>
<evidence type="ECO:0000255" key="1">
    <source>
        <dbReference type="HAMAP-Rule" id="MF_01454"/>
    </source>
</evidence>
<evidence type="ECO:0000255" key="2">
    <source>
        <dbReference type="PROSITE-ProRule" id="PRU01231"/>
    </source>
</evidence>
<name>OBG_SHEHH</name>